<gene>
    <name type="primary">NEIL2</name>
</gene>
<feature type="initiator methionine" description="Removed" evidence="1">
    <location>
        <position position="1"/>
    </location>
</feature>
<feature type="chain" id="PRO_0000248635" description="Endonuclease 8-like 2">
    <location>
        <begin position="2"/>
        <end position="332"/>
    </location>
</feature>
<feature type="zinc finger region" description="FPG-type" evidence="3">
    <location>
        <begin position="284"/>
        <end position="320"/>
    </location>
</feature>
<feature type="region of interest" description="Disordered" evidence="5">
    <location>
        <begin position="56"/>
        <end position="121"/>
    </location>
</feature>
<feature type="compositionally biased region" description="Basic and acidic residues" evidence="5">
    <location>
        <begin position="74"/>
        <end position="84"/>
    </location>
</feature>
<feature type="compositionally biased region" description="Polar residues" evidence="5">
    <location>
        <begin position="94"/>
        <end position="105"/>
    </location>
</feature>
<feature type="active site" description="Schiff-base intermediate with DNA" evidence="4">
    <location>
        <position position="2"/>
    </location>
</feature>
<feature type="active site" description="Proton donor" evidence="4">
    <location>
        <position position="3"/>
    </location>
</feature>
<feature type="active site" description="Proton donor; for beta-elimination activity" evidence="4">
    <location>
        <position position="50"/>
    </location>
</feature>
<feature type="active site" description="Proton donor; for delta-elimination activity" evidence="4">
    <location>
        <position position="310"/>
    </location>
</feature>
<feature type="binding site" evidence="1">
    <location>
        <position position="231"/>
    </location>
    <ligand>
        <name>DNA</name>
        <dbReference type="ChEBI" id="CHEBI:16991"/>
    </ligand>
</feature>
<feature type="modified residue" description="N6-acetyllysine" evidence="2">
    <location>
        <position position="50"/>
    </location>
</feature>
<feature type="modified residue" description="Phosphoserine" evidence="2">
    <location>
        <position position="68"/>
    </location>
</feature>
<feature type="modified residue" description="N6-acetyllysine" evidence="2">
    <location>
        <position position="154"/>
    </location>
</feature>
<protein>
    <recommendedName>
        <fullName>Endonuclease 8-like 2</fullName>
        <ecNumber>3.2.2.-</ecNumber>
        <ecNumber>4.2.99.18</ecNumber>
    </recommendedName>
    <alternativeName>
        <fullName>DNA glycosylase/AP lyase Neil2</fullName>
    </alternativeName>
    <alternativeName>
        <fullName>DNA-(apurinic or apyrimidinic site) lyase Neil2</fullName>
    </alternativeName>
    <alternativeName>
        <fullName>Endonuclease VIII-like 2</fullName>
    </alternativeName>
    <alternativeName>
        <fullName>Nei-like protein 2</fullName>
    </alternativeName>
</protein>
<keyword id="KW-0007">Acetylation</keyword>
<keyword id="KW-0227">DNA damage</keyword>
<keyword id="KW-0234">DNA repair</keyword>
<keyword id="KW-0238">DNA-binding</keyword>
<keyword id="KW-0326">Glycosidase</keyword>
<keyword id="KW-0378">Hydrolase</keyword>
<keyword id="KW-0456">Lyase</keyword>
<keyword id="KW-0479">Metal-binding</keyword>
<keyword id="KW-0511">Multifunctional enzyme</keyword>
<keyword id="KW-0539">Nucleus</keyword>
<keyword id="KW-0597">Phosphoprotein</keyword>
<keyword id="KW-1185">Reference proteome</keyword>
<keyword id="KW-0862">Zinc</keyword>
<keyword id="KW-0863">Zinc-finger</keyword>
<accession>Q5RAJ7</accession>
<proteinExistence type="evidence at transcript level"/>
<dbReference type="EC" id="3.2.2.-"/>
<dbReference type="EC" id="4.2.99.18"/>
<dbReference type="EMBL" id="CR859018">
    <property type="protein sequence ID" value="CAH91213.1"/>
    <property type="molecule type" value="mRNA"/>
</dbReference>
<dbReference type="RefSeq" id="NP_001125714.1">
    <property type="nucleotide sequence ID" value="NM_001132242.1"/>
</dbReference>
<dbReference type="SMR" id="Q5RAJ7"/>
<dbReference type="FunCoup" id="Q5RAJ7">
    <property type="interactions" value="1119"/>
</dbReference>
<dbReference type="STRING" id="9601.ENSPPYP00000020561"/>
<dbReference type="GeneID" id="100172638"/>
<dbReference type="KEGG" id="pon:100172638"/>
<dbReference type="CTD" id="252969"/>
<dbReference type="eggNOG" id="ENOG502RIIB">
    <property type="taxonomic scope" value="Eukaryota"/>
</dbReference>
<dbReference type="InParanoid" id="Q5RAJ7"/>
<dbReference type="OrthoDB" id="444592at2759"/>
<dbReference type="Proteomes" id="UP000001595">
    <property type="component" value="Unplaced"/>
</dbReference>
<dbReference type="GO" id="GO:0005634">
    <property type="term" value="C:nucleus"/>
    <property type="evidence" value="ECO:0007669"/>
    <property type="project" value="UniProtKB-SubCell"/>
</dbReference>
<dbReference type="GO" id="GO:0140078">
    <property type="term" value="F:class I DNA-(apurinic or apyrimidinic site) endonuclease activity"/>
    <property type="evidence" value="ECO:0007669"/>
    <property type="project" value="UniProtKB-EC"/>
</dbReference>
<dbReference type="GO" id="GO:0003684">
    <property type="term" value="F:damaged DNA binding"/>
    <property type="evidence" value="ECO:0007669"/>
    <property type="project" value="InterPro"/>
</dbReference>
<dbReference type="GO" id="GO:0019104">
    <property type="term" value="F:DNA N-glycosylase activity"/>
    <property type="evidence" value="ECO:0007669"/>
    <property type="project" value="InterPro"/>
</dbReference>
<dbReference type="GO" id="GO:0008270">
    <property type="term" value="F:zinc ion binding"/>
    <property type="evidence" value="ECO:0007669"/>
    <property type="project" value="UniProtKB-KW"/>
</dbReference>
<dbReference type="GO" id="GO:0006284">
    <property type="term" value="P:base-excision repair"/>
    <property type="evidence" value="ECO:0007669"/>
    <property type="project" value="InterPro"/>
</dbReference>
<dbReference type="CDD" id="cd08968">
    <property type="entry name" value="MeNeil2_N"/>
    <property type="match status" value="1"/>
</dbReference>
<dbReference type="FunFam" id="1.10.8.50:FF:000010">
    <property type="entry name" value="endonuclease 8-like 2"/>
    <property type="match status" value="1"/>
</dbReference>
<dbReference type="Gene3D" id="1.10.8.50">
    <property type="match status" value="1"/>
</dbReference>
<dbReference type="InterPro" id="IPR015886">
    <property type="entry name" value="DNA_glyclase/AP_lyase_DNA-bd"/>
</dbReference>
<dbReference type="InterPro" id="IPR012319">
    <property type="entry name" value="FPG_cat"/>
</dbReference>
<dbReference type="InterPro" id="IPR010979">
    <property type="entry name" value="Ribosomal_uS13-like_H2TH"/>
</dbReference>
<dbReference type="InterPro" id="IPR000214">
    <property type="entry name" value="Znf_DNA_glyclase/AP_lyase"/>
</dbReference>
<dbReference type="PANTHER" id="PTHR22993:SF29">
    <property type="entry name" value="ENDONUCLEASE 8-LIKE 2"/>
    <property type="match status" value="1"/>
</dbReference>
<dbReference type="PANTHER" id="PTHR22993">
    <property type="entry name" value="FORMAMIDOPYRIMIDINE-DNA GLYCOSYLASE"/>
    <property type="match status" value="1"/>
</dbReference>
<dbReference type="Pfam" id="PF06831">
    <property type="entry name" value="H2TH"/>
    <property type="match status" value="1"/>
</dbReference>
<dbReference type="SMART" id="SM01232">
    <property type="entry name" value="H2TH"/>
    <property type="match status" value="1"/>
</dbReference>
<dbReference type="SUPFAM" id="SSF46946">
    <property type="entry name" value="S13-like H2TH domain"/>
    <property type="match status" value="1"/>
</dbReference>
<dbReference type="PROSITE" id="PS51068">
    <property type="entry name" value="FPG_CAT"/>
    <property type="match status" value="1"/>
</dbReference>
<dbReference type="PROSITE" id="PS51066">
    <property type="entry name" value="ZF_FPG_2"/>
    <property type="match status" value="1"/>
</dbReference>
<organism>
    <name type="scientific">Pongo abelii</name>
    <name type="common">Sumatran orangutan</name>
    <name type="synonym">Pongo pygmaeus abelii</name>
    <dbReference type="NCBI Taxonomy" id="9601"/>
    <lineage>
        <taxon>Eukaryota</taxon>
        <taxon>Metazoa</taxon>
        <taxon>Chordata</taxon>
        <taxon>Craniata</taxon>
        <taxon>Vertebrata</taxon>
        <taxon>Euteleostomi</taxon>
        <taxon>Mammalia</taxon>
        <taxon>Eutheria</taxon>
        <taxon>Euarchontoglires</taxon>
        <taxon>Primates</taxon>
        <taxon>Haplorrhini</taxon>
        <taxon>Catarrhini</taxon>
        <taxon>Hominidae</taxon>
        <taxon>Pongo</taxon>
    </lineage>
</organism>
<comment type="function">
    <text evidence="1">Involved in base excision repair of DNA damaged by oxidation or by mutagenic agents. Has DNA glycosylase activity towards 5-hydroxyuracil and other oxidized derivatives of cytosine with a preference for mismatched double-stranded DNA (DNA bubbles). Has low or no DNA glycosylase activity towards thymine glycol, 2-hydroxyadenine, hypoxanthine and 8-oxoguanine. Has AP (apurinic/apyrimidinic) lyase activity and introduces nicks in the DNA strand. Cleaves the DNA backbone by beta-delta elimination to generate a single-strand break at the site of the removed base with both 3'- and 5'-phosphates (By similarity).</text>
</comment>
<comment type="catalytic activity">
    <reaction evidence="4">
        <text>2'-deoxyribonucleotide-(2'-deoxyribose 5'-phosphate)-2'-deoxyribonucleotide-DNA = a 3'-end 2'-deoxyribonucleotide-(2,3-dehydro-2,3-deoxyribose 5'-phosphate)-DNA + a 5'-end 5'-phospho-2'-deoxyribonucleoside-DNA + H(+)</text>
        <dbReference type="Rhea" id="RHEA:66592"/>
        <dbReference type="Rhea" id="RHEA-COMP:13180"/>
        <dbReference type="Rhea" id="RHEA-COMP:16897"/>
        <dbReference type="Rhea" id="RHEA-COMP:17067"/>
        <dbReference type="ChEBI" id="CHEBI:15378"/>
        <dbReference type="ChEBI" id="CHEBI:136412"/>
        <dbReference type="ChEBI" id="CHEBI:157695"/>
        <dbReference type="ChEBI" id="CHEBI:167181"/>
        <dbReference type="EC" id="4.2.99.18"/>
    </reaction>
</comment>
<comment type="activity regulation">
    <text evidence="1">Acetylation of Lys-50 leads to loss of DNA nicking activity.</text>
</comment>
<comment type="subunit">
    <text evidence="1">Binds EP300.</text>
</comment>
<comment type="subcellular location">
    <subcellularLocation>
        <location evidence="1">Nucleus</location>
    </subcellularLocation>
</comment>
<comment type="domain">
    <text>The zinc-finger domain is important for DNA binding.</text>
</comment>
<comment type="similarity">
    <text evidence="4">Belongs to the FPG family.</text>
</comment>
<evidence type="ECO:0000250" key="1"/>
<evidence type="ECO:0000250" key="2">
    <source>
        <dbReference type="UniProtKB" id="Q969S2"/>
    </source>
</evidence>
<evidence type="ECO:0000255" key="3">
    <source>
        <dbReference type="PROSITE-ProRule" id="PRU00391"/>
    </source>
</evidence>
<evidence type="ECO:0000255" key="4">
    <source>
        <dbReference type="PROSITE-ProRule" id="PRU00392"/>
    </source>
</evidence>
<evidence type="ECO:0000256" key="5">
    <source>
        <dbReference type="SAM" id="MobiDB-lite"/>
    </source>
</evidence>
<sequence length="332" mass="36814">MPEGPLVRKFHHLVSPFVGQQVVKTGGSSKKLQPASLQCLWLQDTQVNGKKLFLRFDPDEEMGPPGSSPPPEPPQKEAQKEGAADPKQVGEPSGQKTPDGSSQSAELVPQGEDDSEYLERDAPAGDAGRWLRVSFGLFGSVWVNEFSRAKQANKRGDWRDPSPRLVLHCGGGGFLAFYNCQMSWSSSPVVTPTCDILSEKFHRGQALEALGQAQPVCYTLLDQRYFSGLGNIIKNEALYRAGIHPLSLGSVLSASRREVLVDHVVEFSTAWLQGKFQGRPQRTQVYQREQCPAGHQVMKEAFGPQDGLQRLTWWCPQCQPQLSEEPEQRQFS</sequence>
<name>NEIL2_PONAB</name>
<reference key="1">
    <citation type="submission" date="2004-11" db="EMBL/GenBank/DDBJ databases">
        <authorList>
            <consortium name="The German cDNA consortium"/>
        </authorList>
    </citation>
    <scope>NUCLEOTIDE SEQUENCE [LARGE SCALE MRNA]</scope>
    <source>
        <tissue>Kidney</tissue>
    </source>
</reference>